<accession>P9WMM7</accession>
<accession>L0T8S2</accession>
<accession>O53909</accession>
<accession>P0A5B3</accession>
<reference key="1">
    <citation type="journal article" date="1998" name="Nature">
        <title>Deciphering the biology of Mycobacterium tuberculosis from the complete genome sequence.</title>
        <authorList>
            <person name="Cole S.T."/>
            <person name="Brosch R."/>
            <person name="Parkhill J."/>
            <person name="Garnier T."/>
            <person name="Churcher C.M."/>
            <person name="Harris D.E."/>
            <person name="Gordon S.V."/>
            <person name="Eiglmeier K."/>
            <person name="Gas S."/>
            <person name="Barry C.E. III"/>
            <person name="Tekaia F."/>
            <person name="Badcock K."/>
            <person name="Basham D."/>
            <person name="Brown D."/>
            <person name="Chillingworth T."/>
            <person name="Connor R."/>
            <person name="Davies R.M."/>
            <person name="Devlin K."/>
            <person name="Feltwell T."/>
            <person name="Gentles S."/>
            <person name="Hamlin N."/>
            <person name="Holroyd S."/>
            <person name="Hornsby T."/>
            <person name="Jagels K."/>
            <person name="Krogh A."/>
            <person name="McLean J."/>
            <person name="Moule S."/>
            <person name="Murphy L.D."/>
            <person name="Oliver S."/>
            <person name="Osborne J."/>
            <person name="Quail M.A."/>
            <person name="Rajandream M.A."/>
            <person name="Rogers J."/>
            <person name="Rutter S."/>
            <person name="Seeger K."/>
            <person name="Skelton S."/>
            <person name="Squares S."/>
            <person name="Squares R."/>
            <person name="Sulston J.E."/>
            <person name="Taylor K."/>
            <person name="Whitehead S."/>
            <person name="Barrell B.G."/>
        </authorList>
    </citation>
    <scope>NUCLEOTIDE SEQUENCE [LARGE SCALE GENOMIC DNA]</scope>
    <source>
        <strain>ATCC 25618 / H37Rv</strain>
    </source>
</reference>
<reference key="2">
    <citation type="journal article" date="2011" name="Mol. Cell. Proteomics">
        <title>Proteogenomic analysis of Mycobacterium tuberculosis by high resolution mass spectrometry.</title>
        <authorList>
            <person name="Kelkar D.S."/>
            <person name="Kumar D."/>
            <person name="Kumar P."/>
            <person name="Balakrishnan L."/>
            <person name="Muthusamy B."/>
            <person name="Yadav A.K."/>
            <person name="Shrivastava P."/>
            <person name="Marimuthu A."/>
            <person name="Anand S."/>
            <person name="Sundaram H."/>
            <person name="Kingsbury R."/>
            <person name="Harsha H.C."/>
            <person name="Nair B."/>
            <person name="Prasad T.S."/>
            <person name="Chauhan D.S."/>
            <person name="Katoch K."/>
            <person name="Katoch V.M."/>
            <person name="Kumar P."/>
            <person name="Chaerkady R."/>
            <person name="Ramachandran S."/>
            <person name="Dash D."/>
            <person name="Pandey A."/>
        </authorList>
    </citation>
    <scope>IDENTIFICATION BY MASS SPECTROMETRY [LARGE SCALE ANALYSIS]</scope>
    <source>
        <strain>ATCC 25618 / H37Rv</strain>
    </source>
</reference>
<feature type="chain" id="PRO_0000136486" description="Phosphoribosyl-AMP cyclohydrolase">
    <location>
        <begin position="1"/>
        <end position="115"/>
    </location>
</feature>
<feature type="binding site" evidence="1">
    <location>
        <position position="80"/>
    </location>
    <ligand>
        <name>Mg(2+)</name>
        <dbReference type="ChEBI" id="CHEBI:18420"/>
    </ligand>
</feature>
<feature type="binding site" evidence="1">
    <location>
        <position position="81"/>
    </location>
    <ligand>
        <name>Zn(2+)</name>
        <dbReference type="ChEBI" id="CHEBI:29105"/>
        <note>ligand shared between dimeric partners</note>
    </ligand>
</feature>
<feature type="binding site" evidence="1">
    <location>
        <position position="82"/>
    </location>
    <ligand>
        <name>Mg(2+)</name>
        <dbReference type="ChEBI" id="CHEBI:18420"/>
    </ligand>
</feature>
<feature type="binding site" evidence="1">
    <location>
        <position position="84"/>
    </location>
    <ligand>
        <name>Mg(2+)</name>
        <dbReference type="ChEBI" id="CHEBI:18420"/>
    </ligand>
</feature>
<feature type="binding site" evidence="1">
    <location>
        <position position="97"/>
    </location>
    <ligand>
        <name>Zn(2+)</name>
        <dbReference type="ChEBI" id="CHEBI:29105"/>
        <note>ligand shared between dimeric partners</note>
    </ligand>
</feature>
<feature type="binding site" evidence="1">
    <location>
        <position position="104"/>
    </location>
    <ligand>
        <name>Zn(2+)</name>
        <dbReference type="ChEBI" id="CHEBI:29105"/>
        <note>ligand shared between dimeric partners</note>
    </ligand>
</feature>
<proteinExistence type="evidence at protein level"/>
<comment type="function">
    <text evidence="1">Catalyzes the hydrolysis of the adenine ring of phosphoribosyl-AMP.</text>
</comment>
<comment type="catalytic activity">
    <reaction evidence="1">
        <text>1-(5-phospho-beta-D-ribosyl)-5'-AMP + H2O = 1-(5-phospho-beta-D-ribosyl)-5-[(5-phospho-beta-D-ribosylamino)methylideneamino]imidazole-4-carboxamide</text>
        <dbReference type="Rhea" id="RHEA:20049"/>
        <dbReference type="ChEBI" id="CHEBI:15377"/>
        <dbReference type="ChEBI" id="CHEBI:58435"/>
        <dbReference type="ChEBI" id="CHEBI:59457"/>
        <dbReference type="EC" id="3.5.4.19"/>
    </reaction>
</comment>
<comment type="cofactor">
    <cofactor evidence="1">
        <name>Mg(2+)</name>
        <dbReference type="ChEBI" id="CHEBI:18420"/>
    </cofactor>
    <text evidence="1">Binds 1 Mg(2+) ion per subunit.</text>
</comment>
<comment type="cofactor">
    <cofactor evidence="1">
        <name>Zn(2+)</name>
        <dbReference type="ChEBI" id="CHEBI:29105"/>
    </cofactor>
    <text evidence="1">Binds 1 zinc ion per subunit.</text>
</comment>
<comment type="pathway">
    <text evidence="1">Amino-acid biosynthesis; L-histidine biosynthesis; L-histidine from 5-phospho-alpha-D-ribose 1-diphosphate: step 3/9.</text>
</comment>
<comment type="subunit">
    <text evidence="1">Homodimer.</text>
</comment>
<comment type="subcellular location">
    <subcellularLocation>
        <location evidence="1">Cytoplasm</location>
    </subcellularLocation>
</comment>
<comment type="similarity">
    <text evidence="1">Belongs to the PRA-CH family.</text>
</comment>
<keyword id="KW-0028">Amino-acid biosynthesis</keyword>
<keyword id="KW-0963">Cytoplasm</keyword>
<keyword id="KW-0368">Histidine biosynthesis</keyword>
<keyword id="KW-0378">Hydrolase</keyword>
<keyword id="KW-0460">Magnesium</keyword>
<keyword id="KW-0479">Metal-binding</keyword>
<keyword id="KW-1185">Reference proteome</keyword>
<keyword id="KW-0862">Zinc</keyword>
<sequence length="115" mass="12465">MTLDPKIAARLKRNADGLVTAVVQERGSGDVLMVAWMNDEALARTLQTREATYYSRSRAEQWVKGATSGHTQHVHSVRLDCDGDAVLLTVDQVGGACHTGDHSCFDAAVLLEPDD</sequence>
<dbReference type="EC" id="3.5.4.19" evidence="1"/>
<dbReference type="EMBL" id="AL123456">
    <property type="protein sequence ID" value="CCP44370.1"/>
    <property type="molecule type" value="Genomic_DNA"/>
</dbReference>
<dbReference type="PIR" id="E70819">
    <property type="entry name" value="E70819"/>
</dbReference>
<dbReference type="RefSeq" id="NP_216638.2">
    <property type="nucleotide sequence ID" value="NC_000962.3"/>
</dbReference>
<dbReference type="RefSeq" id="WP_003407963.1">
    <property type="nucleotide sequence ID" value="NZ_NVQJ01000016.1"/>
</dbReference>
<dbReference type="SMR" id="P9WMM7"/>
<dbReference type="FunCoup" id="P9WMM7">
    <property type="interactions" value="110"/>
</dbReference>
<dbReference type="STRING" id="83332.Rv1606"/>
<dbReference type="PaxDb" id="83332-Rv1606"/>
<dbReference type="DNASU" id="886011"/>
<dbReference type="GeneID" id="45425574"/>
<dbReference type="GeneID" id="886011"/>
<dbReference type="KEGG" id="mtu:Rv1606"/>
<dbReference type="KEGG" id="mtv:RVBD_1606"/>
<dbReference type="TubercuList" id="Rv1606"/>
<dbReference type="eggNOG" id="COG0139">
    <property type="taxonomic scope" value="Bacteria"/>
</dbReference>
<dbReference type="InParanoid" id="P9WMM7"/>
<dbReference type="OrthoDB" id="9795769at2"/>
<dbReference type="PhylomeDB" id="P9WMM7"/>
<dbReference type="UniPathway" id="UPA00031">
    <property type="reaction ID" value="UER00008"/>
</dbReference>
<dbReference type="Proteomes" id="UP000001584">
    <property type="component" value="Chromosome"/>
</dbReference>
<dbReference type="GO" id="GO:0005737">
    <property type="term" value="C:cytoplasm"/>
    <property type="evidence" value="ECO:0007669"/>
    <property type="project" value="UniProtKB-SubCell"/>
</dbReference>
<dbReference type="GO" id="GO:0000287">
    <property type="term" value="F:magnesium ion binding"/>
    <property type="evidence" value="ECO:0007669"/>
    <property type="project" value="UniProtKB-UniRule"/>
</dbReference>
<dbReference type="GO" id="GO:0004635">
    <property type="term" value="F:phosphoribosyl-AMP cyclohydrolase activity"/>
    <property type="evidence" value="ECO:0007669"/>
    <property type="project" value="UniProtKB-UniRule"/>
</dbReference>
<dbReference type="GO" id="GO:0008270">
    <property type="term" value="F:zinc ion binding"/>
    <property type="evidence" value="ECO:0007669"/>
    <property type="project" value="UniProtKB-UniRule"/>
</dbReference>
<dbReference type="GO" id="GO:0000105">
    <property type="term" value="P:L-histidine biosynthetic process"/>
    <property type="evidence" value="ECO:0007669"/>
    <property type="project" value="UniProtKB-UniRule"/>
</dbReference>
<dbReference type="FunFam" id="3.10.20.810:FF:000001">
    <property type="entry name" value="Histidine biosynthesis bifunctional protein HisIE"/>
    <property type="match status" value="1"/>
</dbReference>
<dbReference type="Gene3D" id="3.10.20.810">
    <property type="entry name" value="Phosphoribosyl-AMP cyclohydrolase"/>
    <property type="match status" value="1"/>
</dbReference>
<dbReference type="HAMAP" id="MF_01021">
    <property type="entry name" value="HisI"/>
    <property type="match status" value="1"/>
</dbReference>
<dbReference type="InterPro" id="IPR026660">
    <property type="entry name" value="PRA-CH"/>
</dbReference>
<dbReference type="InterPro" id="IPR002496">
    <property type="entry name" value="PRib_AMP_CycHydrolase_dom"/>
</dbReference>
<dbReference type="InterPro" id="IPR038019">
    <property type="entry name" value="PRib_AMP_CycHydrolase_sf"/>
</dbReference>
<dbReference type="NCBIfam" id="NF000768">
    <property type="entry name" value="PRK00051.1"/>
    <property type="match status" value="1"/>
</dbReference>
<dbReference type="PANTHER" id="PTHR42945">
    <property type="entry name" value="HISTIDINE BIOSYNTHESIS BIFUNCTIONAL PROTEIN"/>
    <property type="match status" value="1"/>
</dbReference>
<dbReference type="PANTHER" id="PTHR42945:SF11">
    <property type="entry name" value="PHOSPHORIBOSYL-AMP CYCLOHYDROLASE"/>
    <property type="match status" value="1"/>
</dbReference>
<dbReference type="Pfam" id="PF01502">
    <property type="entry name" value="PRA-CH"/>
    <property type="match status" value="1"/>
</dbReference>
<dbReference type="SUPFAM" id="SSF141734">
    <property type="entry name" value="HisI-like"/>
    <property type="match status" value="1"/>
</dbReference>
<name>HIS3_MYCTU</name>
<protein>
    <recommendedName>
        <fullName evidence="1">Phosphoribosyl-AMP cyclohydrolase</fullName>
        <shortName evidence="1">PRA-CH</shortName>
        <ecNumber evidence="1">3.5.4.19</ecNumber>
    </recommendedName>
</protein>
<evidence type="ECO:0000255" key="1">
    <source>
        <dbReference type="HAMAP-Rule" id="MF_01021"/>
    </source>
</evidence>
<organism>
    <name type="scientific">Mycobacterium tuberculosis (strain ATCC 25618 / H37Rv)</name>
    <dbReference type="NCBI Taxonomy" id="83332"/>
    <lineage>
        <taxon>Bacteria</taxon>
        <taxon>Bacillati</taxon>
        <taxon>Actinomycetota</taxon>
        <taxon>Actinomycetes</taxon>
        <taxon>Mycobacteriales</taxon>
        <taxon>Mycobacteriaceae</taxon>
        <taxon>Mycobacterium</taxon>
        <taxon>Mycobacterium tuberculosis complex</taxon>
    </lineage>
</organism>
<gene>
    <name evidence="1" type="primary">hisI</name>
    <name type="ordered locus">Rv1606</name>
    <name type="ORF">MTV046.04</name>
</gene>